<comment type="function">
    <text>Together with an NADPH cytochrome P450 the enzyme system catalyzes the terminal hydroxylation as the first step in the assimilation of alkanes and fatty acids. Preferentially hydroxylates hexadecane.</text>
</comment>
<comment type="cofactor">
    <cofactor evidence="1">
        <name>heme</name>
        <dbReference type="ChEBI" id="CHEBI:30413"/>
    </cofactor>
</comment>
<comment type="subcellular location">
    <subcellularLocation>
        <location evidence="3">Membrane</location>
    </subcellularLocation>
    <subcellularLocation>
        <location>Membrane</location>
        <topology>Single-pass membrane protein</topology>
    </subcellularLocation>
</comment>
<comment type="induction">
    <text>By various alkanes.</text>
</comment>
<comment type="similarity">
    <text evidence="3">Belongs to the cytochrome P450 family.</text>
</comment>
<dbReference type="EC" id="1.14.14.-"/>
<dbReference type="EMBL" id="Z13010">
    <property type="protein sequence ID" value="CAA78354.1"/>
    <property type="molecule type" value="Genomic_DNA"/>
</dbReference>
<dbReference type="PIR" id="S22972">
    <property type="entry name" value="S22972"/>
</dbReference>
<dbReference type="SMR" id="P30608"/>
<dbReference type="VEuPathDB" id="FungiDB:CTMYA2_045880"/>
<dbReference type="VEuPathDB" id="FungiDB:CTRG_02725"/>
<dbReference type="GO" id="GO:0016020">
    <property type="term" value="C:membrane"/>
    <property type="evidence" value="ECO:0007669"/>
    <property type="project" value="UniProtKB-SubCell"/>
</dbReference>
<dbReference type="GO" id="GO:0020037">
    <property type="term" value="F:heme binding"/>
    <property type="evidence" value="ECO:0007669"/>
    <property type="project" value="InterPro"/>
</dbReference>
<dbReference type="GO" id="GO:0005506">
    <property type="term" value="F:iron ion binding"/>
    <property type="evidence" value="ECO:0007669"/>
    <property type="project" value="InterPro"/>
</dbReference>
<dbReference type="GO" id="GO:0016712">
    <property type="term" value="F:oxidoreductase activity, acting on paired donors, with incorporation or reduction of molecular oxygen, reduced flavin or flavoprotein as one donor, and incorporation of one atom of oxygen"/>
    <property type="evidence" value="ECO:0007669"/>
    <property type="project" value="InterPro"/>
</dbReference>
<dbReference type="CDD" id="cd11063">
    <property type="entry name" value="CYP52"/>
    <property type="match status" value="1"/>
</dbReference>
<dbReference type="Gene3D" id="1.10.630.10">
    <property type="entry name" value="Cytochrome P450"/>
    <property type="match status" value="1"/>
</dbReference>
<dbReference type="InterPro" id="IPR001128">
    <property type="entry name" value="Cyt_P450"/>
</dbReference>
<dbReference type="InterPro" id="IPR017972">
    <property type="entry name" value="Cyt_P450_CS"/>
</dbReference>
<dbReference type="InterPro" id="IPR002974">
    <property type="entry name" value="Cyt_P450_E_CYP52_ascomycetes"/>
</dbReference>
<dbReference type="InterPro" id="IPR047146">
    <property type="entry name" value="Cyt_P450_E_CYP52_fungi"/>
</dbReference>
<dbReference type="InterPro" id="IPR002402">
    <property type="entry name" value="Cyt_P450_E_grp-II"/>
</dbReference>
<dbReference type="InterPro" id="IPR036396">
    <property type="entry name" value="Cyt_P450_sf"/>
</dbReference>
<dbReference type="PANTHER" id="PTHR24287">
    <property type="entry name" value="P450, PUTATIVE (EUROFUNG)-RELATED"/>
    <property type="match status" value="1"/>
</dbReference>
<dbReference type="PANTHER" id="PTHR24287:SF1">
    <property type="entry name" value="P450, PUTATIVE (EUROFUNG)-RELATED"/>
    <property type="match status" value="1"/>
</dbReference>
<dbReference type="Pfam" id="PF00067">
    <property type="entry name" value="p450"/>
    <property type="match status" value="1"/>
</dbReference>
<dbReference type="PRINTS" id="PR00464">
    <property type="entry name" value="EP450II"/>
</dbReference>
<dbReference type="PRINTS" id="PR01239">
    <property type="entry name" value="EP450IICYP52"/>
</dbReference>
<dbReference type="PRINTS" id="PR00385">
    <property type="entry name" value="P450"/>
</dbReference>
<dbReference type="SUPFAM" id="SSF48264">
    <property type="entry name" value="Cytochrome P450"/>
    <property type="match status" value="1"/>
</dbReference>
<dbReference type="PROSITE" id="PS00086">
    <property type="entry name" value="CYTOCHROME_P450"/>
    <property type="match status" value="1"/>
</dbReference>
<keyword id="KW-0349">Heme</keyword>
<keyword id="KW-0408">Iron</keyword>
<keyword id="KW-0472">Membrane</keyword>
<keyword id="KW-0479">Metal-binding</keyword>
<keyword id="KW-0503">Monooxygenase</keyword>
<keyword id="KW-0560">Oxidoreductase</keyword>
<keyword id="KW-0812">Transmembrane</keyword>
<keyword id="KW-1133">Transmembrane helix</keyword>
<evidence type="ECO:0000250" key="1"/>
<evidence type="ECO:0000255" key="2"/>
<evidence type="ECO:0000305" key="3"/>
<proteinExistence type="evidence at transcript level"/>
<name>CP52F_CANTR</name>
<feature type="chain" id="PRO_0000052024" description="Cytochrome P450 52A6">
    <location>
        <begin position="1"/>
        <end position="524"/>
    </location>
</feature>
<feature type="transmembrane region" description="Helical" evidence="2">
    <location>
        <begin position="17"/>
        <end position="34"/>
    </location>
</feature>
<feature type="binding site" description="axial binding residue" evidence="1">
    <location>
        <position position="472"/>
    </location>
    <ligand>
        <name>heme</name>
        <dbReference type="ChEBI" id="CHEBI:30413"/>
    </ligand>
    <ligandPart>
        <name>Fe</name>
        <dbReference type="ChEBI" id="CHEBI:18248"/>
    </ligandPart>
</feature>
<protein>
    <recommendedName>
        <fullName>Cytochrome P450 52A6</fullName>
        <ecNumber>1.14.14.-</ecNumber>
    </recommendedName>
    <alternativeName>
        <fullName>Alkane-inducible P450-ALK3</fullName>
    </alternativeName>
    <alternativeName>
        <fullName>CYPLIIA6</fullName>
    </alternativeName>
</protein>
<gene>
    <name type="primary">CYP52A6</name>
</gene>
<accession>P30608</accession>
<sequence>MATQEIIDSALPYLTKWYTVITLAALVFLISSNIKNYVKAKKLKCRDPPYFKGAGWTGISPLIEIIKVKGNGRLARFWPIKTFDDYPNHTFYMSIIGALKIVLTVIQENIKAVLATQFTDFSLGTRHAHFYPLLGDGIFTLDGEGWKHSRAMLRPQFARDQIGHVKALEPHIQILAKQIKLNKGKTFDIQELFFRFTVDTATEFLFGESVHSLYDEKLGIPTPNEIPGRDNFATAFNTSQHYLATRTYSQTFYFLTNPKEFRDCNAKVHYLAKYFVNKALNFTPEEIEEKSKSGYVFLYELVKQTRDPKVLQDQLLNIMVAGRDTTAGLLSFAMFELARHPEIWSKLREEIEVNFGVGEESRVEEITFESLKRCEYLKAILNETLRMYPSVPVNSRTATRDTTLPRGGGPNGTDPIFIPKGSTVAYIVYKTHRLEEYYGKDADDFRPERWFEPSTKKLGWAYVPFNGGPRICLGQQFALTEASYVITRLVQMFETVSSPPDVEYPPPKCIHLTMSHDDGVFVKM</sequence>
<reference key="1">
    <citation type="journal article" date="1992" name="DNA Cell Biol.">
        <title>Identification and characterization of additional members of the cytochrome P450 multigene family CYP52 of Candida tropicalis.</title>
        <authorList>
            <person name="Seghezzi W."/>
            <person name="Meili C."/>
            <person name="Ruffiner R."/>
            <person name="Kuenzi R."/>
            <person name="Sanglard D."/>
            <person name="Fiechter A."/>
        </authorList>
    </citation>
    <scope>NUCLEOTIDE SEQUENCE [GENOMIC DNA]</scope>
    <source>
        <strain>ATCC 750 / CBS 94 / DSM 11953 / JCM 1541 / NBRC 1400</strain>
    </source>
</reference>
<organism>
    <name type="scientific">Candida tropicalis</name>
    <name type="common">Yeast</name>
    <dbReference type="NCBI Taxonomy" id="5482"/>
    <lineage>
        <taxon>Eukaryota</taxon>
        <taxon>Fungi</taxon>
        <taxon>Dikarya</taxon>
        <taxon>Ascomycota</taxon>
        <taxon>Saccharomycotina</taxon>
        <taxon>Pichiomycetes</taxon>
        <taxon>Debaryomycetaceae</taxon>
        <taxon>Candida/Lodderomyces clade</taxon>
        <taxon>Candida</taxon>
    </lineage>
</organism>